<comment type="function">
    <text evidence="3 4">Inhibits pectin methylesterase (PME) from flowers and siliques (PubMed:14675772). Inhibits PME from leaves (PubMed:14741367).</text>
</comment>
<comment type="subunit">
    <text evidence="5 6">Monomer and homodimer. Interacts in vitro with PPME1.</text>
</comment>
<comment type="subcellular location">
    <subcellularLocation>
        <location evidence="7">Secreted</location>
        <location evidence="7">Extracellular space</location>
        <location evidence="7">Apoplast</location>
    </subcellularLocation>
</comment>
<comment type="tissue specificity">
    <text evidence="3 4 6">Highest expression in flowers (PubMed:14675772, PubMed:14741367, PubMed:17971035). Expressed exclusively at the pollen tube tip (PubMed:14675772, PubMed:17971035).</text>
</comment>
<comment type="domain">
    <text>The N-terminal alpha-hairpin extension is required for pectinmethylesterase inhibitor activity.</text>
</comment>
<comment type="similarity">
    <text evidence="9">Belongs to the PMEI family.</text>
</comment>
<feature type="signal peptide" evidence="1">
    <location>
        <begin position="1"/>
        <end position="25"/>
    </location>
</feature>
<feature type="chain" id="PRO_0000024706" description="Pectinesterase inhibitor 1">
    <location>
        <begin position="26"/>
        <end position="176"/>
    </location>
</feature>
<feature type="glycosylation site" description="N-linked (GlcNAc...) asparagine" evidence="2">
    <location>
        <position position="154"/>
    </location>
</feature>
<feature type="disulfide bond" evidence="5">
    <location>
        <begin position="35"/>
        <end position="44"/>
    </location>
</feature>
<feature type="disulfide bond" evidence="5">
    <location>
        <begin position="98"/>
        <end position="138"/>
    </location>
</feature>
<feature type="mutagenesis site" description="Inhibits dimer formation and reduces inhibitory activity." evidence="5">
    <original>P</original>
    <variation>A</variation>
    <location>
        <position position="55"/>
    </location>
</feature>
<feature type="turn" evidence="11">
    <location>
        <begin position="31"/>
        <end position="33"/>
    </location>
</feature>
<feature type="helix" evidence="11">
    <location>
        <begin position="34"/>
        <end position="37"/>
    </location>
</feature>
<feature type="helix" evidence="11">
    <location>
        <begin position="41"/>
        <end position="50"/>
    </location>
</feature>
<feature type="helix" evidence="11">
    <location>
        <begin position="57"/>
        <end position="85"/>
    </location>
</feature>
<feature type="helix" evidence="11">
    <location>
        <begin position="89"/>
        <end position="117"/>
    </location>
</feature>
<feature type="helix" evidence="11">
    <location>
        <begin position="121"/>
        <end position="142"/>
    </location>
</feature>
<feature type="strand" evidence="10">
    <location>
        <begin position="145"/>
        <end position="147"/>
    </location>
</feature>
<feature type="helix" evidence="11">
    <location>
        <begin position="150"/>
        <end position="172"/>
    </location>
</feature>
<name>PMEI1_ARATH</name>
<evidence type="ECO:0000255" key="1"/>
<evidence type="ECO:0000255" key="2">
    <source>
        <dbReference type="PROSITE-ProRule" id="PRU00498"/>
    </source>
</evidence>
<evidence type="ECO:0000269" key="3">
    <source>
    </source>
</evidence>
<evidence type="ECO:0000269" key="4">
    <source>
    </source>
</evidence>
<evidence type="ECO:0000269" key="5">
    <source>
    </source>
</evidence>
<evidence type="ECO:0000269" key="6">
    <source>
    </source>
</evidence>
<evidence type="ECO:0000269" key="7">
    <source>
    </source>
</evidence>
<evidence type="ECO:0000303" key="8">
    <source>
    </source>
</evidence>
<evidence type="ECO:0000305" key="9"/>
<evidence type="ECO:0007829" key="10">
    <source>
        <dbReference type="PDB" id="1X8Z"/>
    </source>
</evidence>
<evidence type="ECO:0007829" key="11">
    <source>
        <dbReference type="PDB" id="1X91"/>
    </source>
</evidence>
<organism>
    <name type="scientific">Arabidopsis thaliana</name>
    <name type="common">Mouse-ear cress</name>
    <dbReference type="NCBI Taxonomy" id="3702"/>
    <lineage>
        <taxon>Eukaryota</taxon>
        <taxon>Viridiplantae</taxon>
        <taxon>Streptophyta</taxon>
        <taxon>Embryophyta</taxon>
        <taxon>Tracheophyta</taxon>
        <taxon>Spermatophyta</taxon>
        <taxon>Magnoliopsida</taxon>
        <taxon>eudicotyledons</taxon>
        <taxon>Gunneridae</taxon>
        <taxon>Pentapetalae</taxon>
        <taxon>rosids</taxon>
        <taxon>malvids</taxon>
        <taxon>Brassicales</taxon>
        <taxon>Brassicaceae</taxon>
        <taxon>Camelineae</taxon>
        <taxon>Arabidopsis</taxon>
    </lineage>
</organism>
<sequence length="176" mass="18967">MAANLRNNAFLSSLMFLLLIGSSYAITSSEMSTICDKTLNPSFCLKFLNTKFASPNLQALAKTTLDSTQARATQTLKKLQSIIDGGVDPRSKLAYRSCVDEYESAIGNLEEAFEHLASGDGMGMNMKVSAALDGADTCLDDVKRLRSVDSSVVNNSKTIKNLCGIALVISNMLPRN</sequence>
<reference key="1">
    <citation type="journal article" date="2000" name="Nature">
        <title>Sequence and analysis of chromosome 1 of the plant Arabidopsis thaliana.</title>
        <authorList>
            <person name="Theologis A."/>
            <person name="Ecker J.R."/>
            <person name="Palm C.J."/>
            <person name="Federspiel N.A."/>
            <person name="Kaul S."/>
            <person name="White O."/>
            <person name="Alonso J."/>
            <person name="Altafi H."/>
            <person name="Araujo R."/>
            <person name="Bowman C.L."/>
            <person name="Brooks S.Y."/>
            <person name="Buehler E."/>
            <person name="Chan A."/>
            <person name="Chao Q."/>
            <person name="Chen H."/>
            <person name="Cheuk R.F."/>
            <person name="Chin C.W."/>
            <person name="Chung M.K."/>
            <person name="Conn L."/>
            <person name="Conway A.B."/>
            <person name="Conway A.R."/>
            <person name="Creasy T.H."/>
            <person name="Dewar K."/>
            <person name="Dunn P."/>
            <person name="Etgu P."/>
            <person name="Feldblyum T.V."/>
            <person name="Feng J.-D."/>
            <person name="Fong B."/>
            <person name="Fujii C.Y."/>
            <person name="Gill J.E."/>
            <person name="Goldsmith A.D."/>
            <person name="Haas B."/>
            <person name="Hansen N.F."/>
            <person name="Hughes B."/>
            <person name="Huizar L."/>
            <person name="Hunter J.L."/>
            <person name="Jenkins J."/>
            <person name="Johnson-Hopson C."/>
            <person name="Khan S."/>
            <person name="Khaykin E."/>
            <person name="Kim C.J."/>
            <person name="Koo H.L."/>
            <person name="Kremenetskaia I."/>
            <person name="Kurtz D.B."/>
            <person name="Kwan A."/>
            <person name="Lam B."/>
            <person name="Langin-Hooper S."/>
            <person name="Lee A."/>
            <person name="Lee J.M."/>
            <person name="Lenz C.A."/>
            <person name="Li J.H."/>
            <person name="Li Y.-P."/>
            <person name="Lin X."/>
            <person name="Liu S.X."/>
            <person name="Liu Z.A."/>
            <person name="Luros J.S."/>
            <person name="Maiti R."/>
            <person name="Marziali A."/>
            <person name="Militscher J."/>
            <person name="Miranda M."/>
            <person name="Nguyen M."/>
            <person name="Nierman W.C."/>
            <person name="Osborne B.I."/>
            <person name="Pai G."/>
            <person name="Peterson J."/>
            <person name="Pham P.K."/>
            <person name="Rizzo M."/>
            <person name="Rooney T."/>
            <person name="Rowley D."/>
            <person name="Sakano H."/>
            <person name="Salzberg S.L."/>
            <person name="Schwartz J.R."/>
            <person name="Shinn P."/>
            <person name="Southwick A.M."/>
            <person name="Sun H."/>
            <person name="Tallon L.J."/>
            <person name="Tambunga G."/>
            <person name="Toriumi M.J."/>
            <person name="Town C.D."/>
            <person name="Utterback T."/>
            <person name="Van Aken S."/>
            <person name="Vaysberg M."/>
            <person name="Vysotskaia V.S."/>
            <person name="Walker M."/>
            <person name="Wu D."/>
            <person name="Yu G."/>
            <person name="Fraser C.M."/>
            <person name="Venter J.C."/>
            <person name="Davis R.W."/>
        </authorList>
    </citation>
    <scope>NUCLEOTIDE SEQUENCE [LARGE SCALE GENOMIC DNA]</scope>
    <source>
        <strain>cv. Columbia</strain>
    </source>
</reference>
<reference key="2">
    <citation type="journal article" date="2017" name="Plant J.">
        <title>Araport11: a complete reannotation of the Arabidopsis thaliana reference genome.</title>
        <authorList>
            <person name="Cheng C.Y."/>
            <person name="Krishnakumar V."/>
            <person name="Chan A.P."/>
            <person name="Thibaud-Nissen F."/>
            <person name="Schobel S."/>
            <person name="Town C.D."/>
        </authorList>
    </citation>
    <scope>GENOME REANNOTATION</scope>
    <source>
        <strain>cv. Columbia</strain>
    </source>
</reference>
<reference key="3">
    <citation type="journal article" date="2002" name="Science">
        <title>Functional annotation of a full-length Arabidopsis cDNA collection.</title>
        <authorList>
            <person name="Seki M."/>
            <person name="Narusaka M."/>
            <person name="Kamiya A."/>
            <person name="Ishida J."/>
            <person name="Satou M."/>
            <person name="Sakurai T."/>
            <person name="Nakajima M."/>
            <person name="Enju A."/>
            <person name="Akiyama K."/>
            <person name="Oono Y."/>
            <person name="Muramatsu M."/>
            <person name="Hayashizaki Y."/>
            <person name="Kawai J."/>
            <person name="Carninci P."/>
            <person name="Itoh M."/>
            <person name="Ishii Y."/>
            <person name="Arakawa T."/>
            <person name="Shibata K."/>
            <person name="Shinagawa A."/>
            <person name="Shinozaki K."/>
        </authorList>
    </citation>
    <scope>NUCLEOTIDE SEQUENCE [LARGE SCALE MRNA]</scope>
    <source>
        <strain>cv. Columbia</strain>
    </source>
</reference>
<reference key="4">
    <citation type="journal article" date="2003" name="Science">
        <title>Empirical analysis of transcriptional activity in the Arabidopsis genome.</title>
        <authorList>
            <person name="Yamada K."/>
            <person name="Lim J."/>
            <person name="Dale J.M."/>
            <person name="Chen H."/>
            <person name="Shinn P."/>
            <person name="Palm C.J."/>
            <person name="Southwick A.M."/>
            <person name="Wu H.C."/>
            <person name="Kim C.J."/>
            <person name="Nguyen M."/>
            <person name="Pham P.K."/>
            <person name="Cheuk R.F."/>
            <person name="Karlin-Newmann G."/>
            <person name="Liu S.X."/>
            <person name="Lam B."/>
            <person name="Sakano H."/>
            <person name="Wu T."/>
            <person name="Yu G."/>
            <person name="Miranda M."/>
            <person name="Quach H.L."/>
            <person name="Tripp M."/>
            <person name="Chang C.H."/>
            <person name="Lee J.M."/>
            <person name="Toriumi M.J."/>
            <person name="Chan M.M."/>
            <person name="Tang C.C."/>
            <person name="Onodera C.S."/>
            <person name="Deng J.M."/>
            <person name="Akiyama K."/>
            <person name="Ansari Y."/>
            <person name="Arakawa T."/>
            <person name="Banh J."/>
            <person name="Banno F."/>
            <person name="Bowser L."/>
            <person name="Brooks S.Y."/>
            <person name="Carninci P."/>
            <person name="Chao Q."/>
            <person name="Choy N."/>
            <person name="Enju A."/>
            <person name="Goldsmith A.D."/>
            <person name="Gurjal M."/>
            <person name="Hansen N.F."/>
            <person name="Hayashizaki Y."/>
            <person name="Johnson-Hopson C."/>
            <person name="Hsuan V.W."/>
            <person name="Iida K."/>
            <person name="Karnes M."/>
            <person name="Khan S."/>
            <person name="Koesema E."/>
            <person name="Ishida J."/>
            <person name="Jiang P.X."/>
            <person name="Jones T."/>
            <person name="Kawai J."/>
            <person name="Kamiya A."/>
            <person name="Meyers C."/>
            <person name="Nakajima M."/>
            <person name="Narusaka M."/>
            <person name="Seki M."/>
            <person name="Sakurai T."/>
            <person name="Satou M."/>
            <person name="Tamse R."/>
            <person name="Vaysberg M."/>
            <person name="Wallender E.K."/>
            <person name="Wong C."/>
            <person name="Yamamura Y."/>
            <person name="Yuan S."/>
            <person name="Shinozaki K."/>
            <person name="Davis R.W."/>
            <person name="Theologis A."/>
            <person name="Ecker J.R."/>
        </authorList>
    </citation>
    <scope>NUCLEOTIDE SEQUENCE [LARGE SCALE MRNA]</scope>
    <source>
        <strain>cv. Columbia</strain>
    </source>
</reference>
<reference key="5">
    <citation type="journal article" date="2003" name="FEBS Lett.">
        <title>Identification of pollen-expressed pectin methylesterase inhibitors in Arabidopsis.</title>
        <authorList>
            <person name="Wolf S."/>
            <person name="Grsic-Rausch S."/>
            <person name="Rausch T."/>
            <person name="Greiner S."/>
        </authorList>
    </citation>
    <scope>FUNCTION</scope>
    <scope>TISSUE SPECIFICITY</scope>
</reference>
<reference key="6">
    <citation type="journal article" date="2004" name="FEBS Lett.">
        <title>Two Arabidopsis thaliana genes encode functional pectin methylesterase inhibitors.</title>
        <authorList>
            <person name="Raiola A."/>
            <person name="Camardella L."/>
            <person name="Giovane A."/>
            <person name="Mattei B."/>
            <person name="De Lorenzo G."/>
            <person name="Cervone F."/>
            <person name="Bellincampi D."/>
        </authorList>
    </citation>
    <scope>FUNCTION</scope>
    <scope>TISSUE SPECIFICITY</scope>
</reference>
<reference key="7">
    <citation type="journal article" date="2008" name="Plant J.">
        <title>Elaborate spatial patterning of cell-wall PME and PMEI at the pollen tube tip involves PMEI endocytosis, and reflects the distribution of esterified and de-esterified pectins.</title>
        <authorList>
            <person name="Roeckel N."/>
            <person name="Wolf S."/>
            <person name="Kost B."/>
            <person name="Rausch T."/>
            <person name="Greiner S."/>
        </authorList>
    </citation>
    <scope>INTERACTION WITH PPME1</scope>
    <scope>TISSUE SPECIFICITY</scope>
</reference>
<reference key="8">
    <citation type="journal article" date="2004" name="Plant Cell">
        <title>Structural insights into the target specificity of plant invertase and pectin methylesterase inhibitory proteins.</title>
        <authorList>
            <person name="Hothorn M."/>
            <person name="Wolf S."/>
            <person name="Aloy P."/>
            <person name="Greiner S."/>
            <person name="Scheffzek K."/>
        </authorList>
    </citation>
    <scope>X-RAY CRYSTALLOGRAPHY (1.5 ANGSTROMS) OF 28-176</scope>
    <scope>DISULFIDE BONDS</scope>
    <scope>SUBUNIT</scope>
    <scope>MUTAGENESIS OF PRO-55</scope>
</reference>
<reference key="9">
    <citation type="journal article" date="2011" name="Plant J.">
        <title>Protein trafficking to the cell wall occurs through mechanisms distinguishable from default sorting in tobacco.</title>
        <authorList>
            <person name="De Caroli M."/>
            <person name="Lenucci M.S."/>
            <person name="Di Sansebastiano G.P."/>
            <person name="Dalessandro G."/>
            <person name="De Lorenzo G."/>
            <person name="Piro G."/>
        </authorList>
    </citation>
    <scope>SUBCELLULAR LOCATION</scope>
</reference>
<proteinExistence type="evidence at protein level"/>
<accession>Q9LNF2</accession>
<protein>
    <recommendedName>
        <fullName evidence="9">Pectinesterase inhibitor 1</fullName>
    </recommendedName>
    <alternativeName>
        <fullName evidence="8">Pectin methylesterase inhibitor 1</fullName>
        <shortName evidence="8">AtPMEI1</shortName>
    </alternativeName>
</protein>
<gene>
    <name evidence="8" type="primary">PMEI1</name>
    <name type="ordered locus">At1g48020</name>
    <name type="ORF">F21D18.29</name>
    <name type="ORF">F21D18_23</name>
    <name type="ORF">T2J15.7</name>
</gene>
<dbReference type="EMBL" id="AC023673">
    <property type="protein sequence ID" value="AAF79530.1"/>
    <property type="molecule type" value="Genomic_DNA"/>
</dbReference>
<dbReference type="EMBL" id="AC051631">
    <property type="protein sequence ID" value="AAG51524.1"/>
    <property type="molecule type" value="Genomic_DNA"/>
</dbReference>
<dbReference type="EMBL" id="CP002684">
    <property type="protein sequence ID" value="AEE32238.1"/>
    <property type="molecule type" value="Genomic_DNA"/>
</dbReference>
<dbReference type="EMBL" id="AK118003">
    <property type="protein sequence ID" value="BAC42636.1"/>
    <property type="molecule type" value="mRNA"/>
</dbReference>
<dbReference type="EMBL" id="BT003715">
    <property type="protein sequence ID" value="AAO39943.1"/>
    <property type="molecule type" value="mRNA"/>
</dbReference>
<dbReference type="RefSeq" id="NP_175236.1">
    <property type="nucleotide sequence ID" value="NM_103698.3"/>
</dbReference>
<dbReference type="PDB" id="1X8Z">
    <property type="method" value="X-ray"/>
    <property type="resolution" value="2.86 A"/>
    <property type="chains" value="A/B/C=28-176"/>
</dbReference>
<dbReference type="PDB" id="1X90">
    <property type="method" value="X-ray"/>
    <property type="resolution" value="2.68 A"/>
    <property type="chains" value="A/B=28-176"/>
</dbReference>
<dbReference type="PDB" id="1X91">
    <property type="method" value="X-ray"/>
    <property type="resolution" value="1.50 A"/>
    <property type="chains" value="A=28-176"/>
</dbReference>
<dbReference type="PDBsum" id="1X8Z"/>
<dbReference type="PDBsum" id="1X90"/>
<dbReference type="PDBsum" id="1X91"/>
<dbReference type="SMR" id="Q9LNF2"/>
<dbReference type="BioGRID" id="26445">
    <property type="interactions" value="1"/>
</dbReference>
<dbReference type="FunCoup" id="Q9LNF2">
    <property type="interactions" value="20"/>
</dbReference>
<dbReference type="STRING" id="3702.Q9LNF2"/>
<dbReference type="GlyCosmos" id="Q9LNF2">
    <property type="glycosylation" value="1 site, No reported glycans"/>
</dbReference>
<dbReference type="GlyGen" id="Q9LNF2">
    <property type="glycosylation" value="1 site"/>
</dbReference>
<dbReference type="PaxDb" id="3702-AT1G48020.1"/>
<dbReference type="ProteomicsDB" id="226185"/>
<dbReference type="EnsemblPlants" id="AT1G48020.1">
    <property type="protein sequence ID" value="AT1G48020.1"/>
    <property type="gene ID" value="AT1G48020"/>
</dbReference>
<dbReference type="GeneID" id="841220"/>
<dbReference type="Gramene" id="AT1G48020.1">
    <property type="protein sequence ID" value="AT1G48020.1"/>
    <property type="gene ID" value="AT1G48020"/>
</dbReference>
<dbReference type="KEGG" id="ath:AT1G48020"/>
<dbReference type="Araport" id="AT1G48020"/>
<dbReference type="TAIR" id="AT1G48020">
    <property type="gene designation" value="PMEI1"/>
</dbReference>
<dbReference type="eggNOG" id="ENOG502S9C3">
    <property type="taxonomic scope" value="Eukaryota"/>
</dbReference>
<dbReference type="HOGENOM" id="CLU_123543_1_0_1"/>
<dbReference type="InParanoid" id="Q9LNF2"/>
<dbReference type="OMA" id="KSHYRIC"/>
<dbReference type="OrthoDB" id="764172at2759"/>
<dbReference type="PhylomeDB" id="Q9LNF2"/>
<dbReference type="EvolutionaryTrace" id="Q9LNF2"/>
<dbReference type="PRO" id="PR:Q9LNF2"/>
<dbReference type="Proteomes" id="UP000006548">
    <property type="component" value="Chromosome 1"/>
</dbReference>
<dbReference type="ExpressionAtlas" id="Q9LNF2">
    <property type="expression patterns" value="baseline and differential"/>
</dbReference>
<dbReference type="GO" id="GO:0048046">
    <property type="term" value="C:apoplast"/>
    <property type="evidence" value="ECO:0000314"/>
    <property type="project" value="UniProtKB"/>
</dbReference>
<dbReference type="GO" id="GO:0090404">
    <property type="term" value="C:pollen tube tip"/>
    <property type="evidence" value="ECO:0000303"/>
    <property type="project" value="TAIR"/>
</dbReference>
<dbReference type="GO" id="GO:0046910">
    <property type="term" value="F:pectinesterase inhibitor activity"/>
    <property type="evidence" value="ECO:0000314"/>
    <property type="project" value="TAIR"/>
</dbReference>
<dbReference type="GO" id="GO:0009860">
    <property type="term" value="P:pollen tube growth"/>
    <property type="evidence" value="ECO:0000314"/>
    <property type="project" value="TAIR"/>
</dbReference>
<dbReference type="CDD" id="cd15797">
    <property type="entry name" value="PMEI"/>
    <property type="match status" value="1"/>
</dbReference>
<dbReference type="FunFam" id="1.20.140.40:FF:000008">
    <property type="entry name" value="Invertase/pectin methylesterase inhibitor family protein"/>
    <property type="match status" value="1"/>
</dbReference>
<dbReference type="Gene3D" id="1.20.140.40">
    <property type="entry name" value="Invertase/pectin methylesterase inhibitor family protein"/>
    <property type="match status" value="1"/>
</dbReference>
<dbReference type="InterPro" id="IPR035513">
    <property type="entry name" value="Invertase/methylesterase_inhib"/>
</dbReference>
<dbReference type="InterPro" id="IPR052421">
    <property type="entry name" value="PCW_Enzyme_Inhibitor"/>
</dbReference>
<dbReference type="InterPro" id="IPR006501">
    <property type="entry name" value="Pectinesterase_inhib_dom"/>
</dbReference>
<dbReference type="InterPro" id="IPR034086">
    <property type="entry name" value="PMEI_plant"/>
</dbReference>
<dbReference type="NCBIfam" id="TIGR01614">
    <property type="entry name" value="PME_inhib"/>
    <property type="match status" value="1"/>
</dbReference>
<dbReference type="PANTHER" id="PTHR36710:SF22">
    <property type="entry name" value="PECTINESTERASE INHIBITOR 1"/>
    <property type="match status" value="1"/>
</dbReference>
<dbReference type="PANTHER" id="PTHR36710">
    <property type="entry name" value="PECTINESTERASE INHIBITOR-LIKE"/>
    <property type="match status" value="1"/>
</dbReference>
<dbReference type="Pfam" id="PF04043">
    <property type="entry name" value="PMEI"/>
    <property type="match status" value="1"/>
</dbReference>
<dbReference type="SMART" id="SM00856">
    <property type="entry name" value="PMEI"/>
    <property type="match status" value="1"/>
</dbReference>
<dbReference type="SUPFAM" id="SSF101148">
    <property type="entry name" value="Plant invertase/pectin methylesterase inhibitor"/>
    <property type="match status" value="1"/>
</dbReference>
<keyword id="KW-0002">3D-structure</keyword>
<keyword id="KW-0052">Apoplast</keyword>
<keyword id="KW-1015">Disulfide bond</keyword>
<keyword id="KW-0325">Glycoprotein</keyword>
<keyword id="KW-1185">Reference proteome</keyword>
<keyword id="KW-0964">Secreted</keyword>
<keyword id="KW-0732">Signal</keyword>